<protein>
    <recommendedName>
        <fullName>SH3-containing GRB2-like protein 3-interacting protein 1</fullName>
    </recommendedName>
    <alternativeName>
        <fullName>Endophilin-3-interacting protein</fullName>
    </alternativeName>
</protein>
<keyword id="KW-0168">Coated pit</keyword>
<keyword id="KW-0254">Endocytosis</keyword>
<keyword id="KW-0472">Membrane</keyword>
<keyword id="KW-0597">Phosphoprotein</keyword>
<keyword id="KW-1185">Reference proteome</keyword>
<proteinExistence type="evidence at transcript level"/>
<reference key="1">
    <citation type="submission" date="2004-11" db="EMBL/GenBank/DDBJ databases">
        <authorList>
            <consortium name="The German cDNA consortium"/>
        </authorList>
    </citation>
    <scope>NUCLEOTIDE SEQUENCE [LARGE SCALE MRNA]</scope>
    <source>
        <tissue>Brain cortex</tissue>
    </source>
</reference>
<sequence length="804" mass="86463">MMEGLKKRTRKAFGIRKKEKDTDSTGSPDRDGIKKSNGAPNGFYAEIDWERYNSPELDEEGYSIRPEEPGSTKGKHFYSSSESEEEEESHKKFNIKIKPLQSKDILKNAATVDELKASIGNIALSPSPVRKSPRRSPGAIKWNLSSEEVARPRRSTPTPELISKKPPDDTTALAPLFGPPLESAFDEQKTEVLLDQPEIWGSGQPINPSMESPKLTRPFPTGTPPPLPPKNVPATPPRTGSPLTIGPGNDQSATEVKIEKLPSINDLDSIFGPVLSPKSVAVNAEEKWVHFSDTSPEHVTPELTPREKVVSPPATPDNPADSPAPGPLGPPGPTGPPGPPGPPRNVPSPLNLEEVQKKVAEQTFIKDDYLETISSPKDFGLGQRATPPPPPPPTYRTVVSSPGPGSGPGTGTTSGASSPARPATPLLPCSSTTPPPPPPRPPSRPKLPPGKPGVGDVSRPFSPPIHSSSPPPIAPLARAESTSSISSTNSLSAATTPTVENEQPSLVWFDRGKFYLTFEGSSRGPSPLTMGAQDTLPVAAAFTETVNAYFKGADPSKCIVKITGEMVLSFPAGITRHFANNPSPAALTFRVINFSRLEHVLPNPQLLCCDNTQNDANTKEFWVNMPNLMTHLKKVSEQKPQATYYNVDMLKYQVSAQGIQSTPLNLAVNWRCEPSSTDLRIDYKYNTDAMTTAVALNNVQFLVPIDGGVTKLQAVLPPAVRNAEQQRILWKIPDISQKSENGGVGSLLARFQLSEGPSKPSPLVVQFTSEGSTLSGCDIELVGAGYRFSLIKKRFAAGKYLADN</sequence>
<comment type="function">
    <text evidence="2">May function in clathrin-mediated endocytosis. Has both a membrane binding/tubulating activity and the ability to recruit proteins essential to the formation of functional clathrin-coated pits. Has a preference for membranes enriched in phosphatidylserine and phosphoinositides and is required for the endocytosis of the transferrin receptor. May also bind tubulin. May play a role in the regulation of energy homeostasis.</text>
</comment>
<comment type="subunit">
    <text evidence="2 3 6">Interacts with proteins essential or regulating the formation of functional clathrin-coated pits (Probable). Interacts with CANX (By similarity). Interacts with AP2A1 (By similarity). Interacts with EPS15 (By similarity). Interacts with SH3GL3 (By similarity). Interacts with AMPH (By similarity). Interacts with ITSN1 (via SH3 domains) (By similarity). Interacts with and REPS1 (By similarity).</text>
</comment>
<comment type="subcellular location">
    <subcellularLocation>
        <location evidence="3">Membrane</location>
        <location evidence="3">Clathrin-coated pit</location>
        <topology evidence="3">Peripheral membrane protein</topology>
        <orientation evidence="3">Cytoplasmic side</orientation>
    </subcellularLocation>
</comment>
<gene>
    <name type="primary">SGIP1</name>
</gene>
<accession>Q5RDL3</accession>
<feature type="chain" id="PRO_0000248397" description="SH3-containing GRB2-like protein 3-interacting protein 1">
    <location>
        <begin position="1"/>
        <end position="804"/>
    </location>
</feature>
<feature type="domain" description="MHD" evidence="4">
    <location>
        <begin position="535"/>
        <end position="803"/>
    </location>
</feature>
<feature type="region of interest" description="Disordered" evidence="5">
    <location>
        <begin position="1"/>
        <end position="90"/>
    </location>
</feature>
<feature type="region of interest" description="Disordered" evidence="5">
    <location>
        <begin position="124"/>
        <end position="181"/>
    </location>
</feature>
<feature type="region of interest" description="Disordered" evidence="5">
    <location>
        <begin position="199"/>
        <end position="254"/>
    </location>
</feature>
<feature type="region of interest" description="Disordered" evidence="5">
    <location>
        <begin position="289"/>
        <end position="500"/>
    </location>
</feature>
<feature type="region of interest" description="Interaction with DPF motifs-containing proteins" evidence="3">
    <location>
        <begin position="537"/>
        <end position="543"/>
    </location>
</feature>
<feature type="region of interest" description="Interaction with DPF motifs-containing proteins" evidence="3">
    <location>
        <begin position="569"/>
        <end position="571"/>
    </location>
</feature>
<feature type="region of interest" description="Necessary and sufficient to mediate interaction with CANX" evidence="2">
    <location>
        <begin position="625"/>
        <end position="804"/>
    </location>
</feature>
<feature type="region of interest" description="Interaction with DPF motifs-containing proteins" evidence="3">
    <location>
        <begin position="643"/>
        <end position="646"/>
    </location>
</feature>
<feature type="region of interest" description="Interaction with DPF motifs-containing proteins" evidence="3">
    <location>
        <begin position="789"/>
        <end position="794"/>
    </location>
</feature>
<feature type="compositionally biased region" description="Basic and acidic residues" evidence="5">
    <location>
        <begin position="16"/>
        <end position="34"/>
    </location>
</feature>
<feature type="compositionally biased region" description="Pro residues" evidence="5">
    <location>
        <begin position="221"/>
        <end position="236"/>
    </location>
</feature>
<feature type="compositionally biased region" description="Basic and acidic residues" evidence="5">
    <location>
        <begin position="289"/>
        <end position="309"/>
    </location>
</feature>
<feature type="compositionally biased region" description="Pro residues" evidence="5">
    <location>
        <begin position="322"/>
        <end position="346"/>
    </location>
</feature>
<feature type="compositionally biased region" description="Basic and acidic residues" evidence="5">
    <location>
        <begin position="354"/>
        <end position="369"/>
    </location>
</feature>
<feature type="compositionally biased region" description="Low complexity" evidence="5">
    <location>
        <begin position="413"/>
        <end position="432"/>
    </location>
</feature>
<feature type="compositionally biased region" description="Pro residues" evidence="5">
    <location>
        <begin position="433"/>
        <end position="451"/>
    </location>
</feature>
<feature type="compositionally biased region" description="Low complexity" evidence="5">
    <location>
        <begin position="458"/>
        <end position="468"/>
    </location>
</feature>
<feature type="compositionally biased region" description="Low complexity" evidence="5">
    <location>
        <begin position="475"/>
        <end position="498"/>
    </location>
</feature>
<feature type="modified residue" description="Phosphoserine" evidence="2">
    <location>
        <position position="54"/>
    </location>
</feature>
<feature type="modified residue" description="Phosphoserine" evidence="1">
    <location>
        <position position="80"/>
    </location>
</feature>
<feature type="modified residue" description="Phosphoserine" evidence="1">
    <location>
        <position position="81"/>
    </location>
</feature>
<feature type="modified residue" description="Phosphoserine" evidence="1">
    <location>
        <position position="83"/>
    </location>
</feature>
<feature type="modified residue" description="Phosphoserine" evidence="2">
    <location>
        <position position="125"/>
    </location>
</feature>
<feature type="modified residue" description="Phosphoserine" evidence="2">
    <location>
        <position position="127"/>
    </location>
</feature>
<feature type="modified residue" description="Phosphoserine" evidence="2">
    <location>
        <position position="132"/>
    </location>
</feature>
<feature type="modified residue" description="Phosphoserine" evidence="1">
    <location>
        <position position="145"/>
    </location>
</feature>
<feature type="modified residue" description="Phosphothreonine" evidence="2">
    <location>
        <position position="156"/>
    </location>
</feature>
<feature type="modified residue" description="Phosphothreonine" evidence="2">
    <location>
        <position position="158"/>
    </location>
</feature>
<feature type="modified residue" description="Phosphoserine" evidence="1">
    <location>
        <position position="212"/>
    </location>
</feature>
<feature type="modified residue" description="Phosphothreonine" evidence="2">
    <location>
        <position position="223"/>
    </location>
</feature>
<feature type="modified residue" description="Phosphothreonine" evidence="2">
    <location>
        <position position="235"/>
    </location>
</feature>
<feature type="modified residue" description="Phosphoserine" evidence="2">
    <location>
        <position position="241"/>
    </location>
</feature>
<feature type="modified residue" description="Phosphoserine" evidence="2">
    <location>
        <position position="263"/>
    </location>
</feature>
<feature type="modified residue" description="Phosphoserine" evidence="2">
    <location>
        <position position="276"/>
    </location>
</feature>
<feature type="modified residue" description="Phosphoserine" evidence="2">
    <location>
        <position position="292"/>
    </location>
</feature>
<feature type="modified residue" description="Phosphoserine" evidence="2">
    <location>
        <position position="295"/>
    </location>
</feature>
<feature type="modified residue" description="Phosphothreonine" evidence="2">
    <location>
        <position position="300"/>
    </location>
</feature>
<feature type="modified residue" description="Phosphothreonine" evidence="2">
    <location>
        <position position="304"/>
    </location>
</feature>
<feature type="modified residue" description="Phosphoserine" evidence="2">
    <location>
        <position position="348"/>
    </location>
</feature>
<feature type="modified residue" description="Phosphoserine" evidence="2">
    <location>
        <position position="375"/>
    </location>
</feature>
<feature type="modified residue" description="Phosphothreonine" evidence="2">
    <location>
        <position position="386"/>
    </location>
</feature>
<feature type="modified residue" description="Phosphoserine" evidence="2">
    <location>
        <position position="462"/>
    </location>
</feature>
<name>SGIP1_PONAB</name>
<organism>
    <name type="scientific">Pongo abelii</name>
    <name type="common">Sumatran orangutan</name>
    <name type="synonym">Pongo pygmaeus abelii</name>
    <dbReference type="NCBI Taxonomy" id="9601"/>
    <lineage>
        <taxon>Eukaryota</taxon>
        <taxon>Metazoa</taxon>
        <taxon>Chordata</taxon>
        <taxon>Craniata</taxon>
        <taxon>Vertebrata</taxon>
        <taxon>Euteleostomi</taxon>
        <taxon>Mammalia</taxon>
        <taxon>Eutheria</taxon>
        <taxon>Euarchontoglires</taxon>
        <taxon>Primates</taxon>
        <taxon>Haplorrhini</taxon>
        <taxon>Catarrhini</taxon>
        <taxon>Hominidae</taxon>
        <taxon>Pongo</taxon>
    </lineage>
</organism>
<evidence type="ECO:0000250" key="1">
    <source>
        <dbReference type="UniProtKB" id="P0DJJ3"/>
    </source>
</evidence>
<evidence type="ECO:0000250" key="2">
    <source>
        <dbReference type="UniProtKB" id="Q8VD37"/>
    </source>
</evidence>
<evidence type="ECO:0000250" key="3">
    <source>
        <dbReference type="UniProtKB" id="Q9BQI5"/>
    </source>
</evidence>
<evidence type="ECO:0000255" key="4">
    <source>
        <dbReference type="PROSITE-ProRule" id="PRU00404"/>
    </source>
</evidence>
<evidence type="ECO:0000256" key="5">
    <source>
        <dbReference type="SAM" id="MobiDB-lite"/>
    </source>
</evidence>
<evidence type="ECO:0000305" key="6"/>
<dbReference type="EMBL" id="CR857892">
    <property type="protein sequence ID" value="CAH90144.1"/>
    <property type="molecule type" value="mRNA"/>
</dbReference>
<dbReference type="RefSeq" id="NP_001125037.1">
    <property type="nucleotide sequence ID" value="NM_001131565.1"/>
</dbReference>
<dbReference type="SMR" id="Q5RDL3"/>
<dbReference type="STRING" id="9601.ENSPPYP00000001475"/>
<dbReference type="GeneID" id="100171918"/>
<dbReference type="KEGG" id="pon:100171918"/>
<dbReference type="CTD" id="84251"/>
<dbReference type="eggNOG" id="KOG2398">
    <property type="taxonomic scope" value="Eukaryota"/>
</dbReference>
<dbReference type="InParanoid" id="Q5RDL3"/>
<dbReference type="OrthoDB" id="5593455at2759"/>
<dbReference type="Proteomes" id="UP000001595">
    <property type="component" value="Unplaced"/>
</dbReference>
<dbReference type="GO" id="GO:0030122">
    <property type="term" value="C:AP-2 adaptor complex"/>
    <property type="evidence" value="ECO:0000250"/>
    <property type="project" value="UniProtKB"/>
</dbReference>
<dbReference type="GO" id="GO:0030136">
    <property type="term" value="C:clathrin-coated vesicle"/>
    <property type="evidence" value="ECO:0000250"/>
    <property type="project" value="UniProtKB"/>
</dbReference>
<dbReference type="GO" id="GO:0005737">
    <property type="term" value="C:cytoplasm"/>
    <property type="evidence" value="ECO:0000250"/>
    <property type="project" value="UniProtKB"/>
</dbReference>
<dbReference type="GO" id="GO:0005886">
    <property type="term" value="C:plasma membrane"/>
    <property type="evidence" value="ECO:0000250"/>
    <property type="project" value="UniProtKB"/>
</dbReference>
<dbReference type="GO" id="GO:0098793">
    <property type="term" value="C:presynapse"/>
    <property type="evidence" value="ECO:0007669"/>
    <property type="project" value="GOC"/>
</dbReference>
<dbReference type="GO" id="GO:0008017">
    <property type="term" value="F:microtubule binding"/>
    <property type="evidence" value="ECO:0000250"/>
    <property type="project" value="UniProtKB"/>
</dbReference>
<dbReference type="GO" id="GO:0005543">
    <property type="term" value="F:phospholipid binding"/>
    <property type="evidence" value="ECO:0000250"/>
    <property type="project" value="UniProtKB"/>
</dbReference>
<dbReference type="GO" id="GO:0048268">
    <property type="term" value="P:clathrin coat assembly"/>
    <property type="evidence" value="ECO:0007669"/>
    <property type="project" value="TreeGrafter"/>
</dbReference>
<dbReference type="GO" id="GO:0072583">
    <property type="term" value="P:clathrin-dependent endocytosis"/>
    <property type="evidence" value="ECO:0007669"/>
    <property type="project" value="InterPro"/>
</dbReference>
<dbReference type="GO" id="GO:0097009">
    <property type="term" value="P:energy homeostasis"/>
    <property type="evidence" value="ECO:0000250"/>
    <property type="project" value="UniProtKB"/>
</dbReference>
<dbReference type="GO" id="GO:2000253">
    <property type="term" value="P:positive regulation of feeding behavior"/>
    <property type="evidence" value="ECO:0000250"/>
    <property type="project" value="UniProtKB"/>
</dbReference>
<dbReference type="GO" id="GO:0048260">
    <property type="term" value="P:positive regulation of receptor-mediated endocytosis"/>
    <property type="evidence" value="ECO:0000250"/>
    <property type="project" value="UniProtKB"/>
</dbReference>
<dbReference type="GO" id="GO:0002021">
    <property type="term" value="P:response to dietary excess"/>
    <property type="evidence" value="ECO:0000250"/>
    <property type="project" value="UniProtKB"/>
</dbReference>
<dbReference type="GO" id="GO:0048488">
    <property type="term" value="P:synaptic vesicle endocytosis"/>
    <property type="evidence" value="ECO:0007669"/>
    <property type="project" value="TreeGrafter"/>
</dbReference>
<dbReference type="CDD" id="cd09266">
    <property type="entry name" value="SGIP1_MHD"/>
    <property type="match status" value="1"/>
</dbReference>
<dbReference type="FunFam" id="2.60.40.1170:FF:000005">
    <property type="entry name" value="SH3-containing GRB2-like protein 3-interacting protein 1 isoform X3"/>
    <property type="match status" value="1"/>
</dbReference>
<dbReference type="Gene3D" id="2.60.40.1170">
    <property type="entry name" value="Mu homology domain, subdomain B"/>
    <property type="match status" value="2"/>
</dbReference>
<dbReference type="InterPro" id="IPR036168">
    <property type="entry name" value="AP2_Mu_C_sf"/>
</dbReference>
<dbReference type="InterPro" id="IPR028565">
    <property type="entry name" value="MHD"/>
</dbReference>
<dbReference type="InterPro" id="IPR018808">
    <property type="entry name" value="Muniscin_C"/>
</dbReference>
<dbReference type="InterPro" id="IPR037984">
    <property type="entry name" value="SGIP1_MHD"/>
</dbReference>
<dbReference type="PANTHER" id="PTHR23065:SF8">
    <property type="entry name" value="F-BAR DOMAIN ONLY PROTEIN 2"/>
    <property type="match status" value="1"/>
</dbReference>
<dbReference type="PANTHER" id="PTHR23065">
    <property type="entry name" value="PROLINE-SERINE-THREONINE PHOSPHATASE INTERACTING PROTEIN 1"/>
    <property type="match status" value="1"/>
</dbReference>
<dbReference type="Pfam" id="PF10291">
    <property type="entry name" value="muHD"/>
    <property type="match status" value="1"/>
</dbReference>
<dbReference type="SUPFAM" id="SSF49447">
    <property type="entry name" value="Second domain of Mu2 adaptin subunit (ap50) of ap2 adaptor"/>
    <property type="match status" value="1"/>
</dbReference>
<dbReference type="PROSITE" id="PS51072">
    <property type="entry name" value="MHD"/>
    <property type="match status" value="1"/>
</dbReference>